<feature type="initiator methionine" description="Removed" evidence="4">
    <location>
        <position position="1"/>
    </location>
</feature>
<feature type="chain" id="PRO_0000090112" description="Triosephosphate isomerase">
    <location>
        <begin position="2"/>
        <end position="249"/>
    </location>
</feature>
<feature type="active site" description="Electrophile" evidence="5">
    <location>
        <position position="96"/>
    </location>
</feature>
<feature type="active site" description="Proton acceptor" evidence="5">
    <location>
        <position position="166"/>
    </location>
</feature>
<feature type="binding site" evidence="5">
    <location>
        <position position="12"/>
    </location>
    <ligand>
        <name>substrate</name>
    </ligand>
</feature>
<feature type="binding site" evidence="5">
    <location>
        <position position="14"/>
    </location>
    <ligand>
        <name>substrate</name>
    </ligand>
</feature>
<feature type="modified residue" description="N6-acetyllysine" evidence="4">
    <location>
        <position position="14"/>
    </location>
</feature>
<feature type="modified residue" description="3'-nitrotyrosine" evidence="2">
    <location>
        <position position="68"/>
    </location>
</feature>
<feature type="modified residue" description="Phosphoserine" evidence="4">
    <location>
        <position position="80"/>
    </location>
</feature>
<feature type="modified residue" description="Phosphoserine" evidence="3">
    <location>
        <position position="106"/>
    </location>
</feature>
<feature type="modified residue" description="N6-succinyllysine" evidence="2">
    <location>
        <position position="149"/>
    </location>
</feature>
<feature type="modified residue" description="N6-acetyllysine; alternate" evidence="2">
    <location>
        <position position="156"/>
    </location>
</feature>
<feature type="modified residue" description="N6-succinyllysine; alternate" evidence="2">
    <location>
        <position position="156"/>
    </location>
</feature>
<feature type="modified residue" description="Phosphoserine" evidence="2">
    <location>
        <position position="159"/>
    </location>
</feature>
<feature type="modified residue" description="Phosphothreonine" evidence="2">
    <location>
        <position position="173"/>
    </location>
</feature>
<feature type="modified residue" description="N6-acetyllysine; alternate" evidence="4">
    <location>
        <position position="194"/>
    </location>
</feature>
<feature type="modified residue" description="N6-methyllysine; alternate" evidence="4">
    <location>
        <position position="194"/>
    </location>
</feature>
<feature type="modified residue" description="N6-succinyllysine; alternate" evidence="2">
    <location>
        <position position="194"/>
    </location>
</feature>
<feature type="modified residue" description="Phosphoserine" evidence="3">
    <location>
        <position position="198"/>
    </location>
</feature>
<feature type="modified residue" description="3'-nitrotyrosine" evidence="2">
    <location>
        <position position="209"/>
    </location>
</feature>
<feature type="modified residue" description="Phosphoserine" evidence="4">
    <location>
        <position position="212"/>
    </location>
</feature>
<feature type="modified residue" description="Phosphothreonine" evidence="4">
    <location>
        <position position="214"/>
    </location>
</feature>
<feature type="modified residue" description="Phosphoserine" evidence="4">
    <location>
        <position position="223"/>
    </location>
</feature>
<feature type="modified residue" description="N6-acetyllysine" evidence="4">
    <location>
        <position position="238"/>
    </location>
</feature>
<feature type="cross-link" description="Glycyl lysine isopeptide (Lys-Gly) (interchain with G-Cter in SUMO1)" evidence="4">
    <location>
        <position position="142"/>
    </location>
</feature>
<feature type="sequence conflict" description="In Ref. 2; AA sequence." evidence="6" ref="2">
    <original>G</original>
    <variation>N</variation>
    <location>
        <position position="11"/>
    </location>
</feature>
<dbReference type="EC" id="5.3.1.1" evidence="5"/>
<dbReference type="EC" id="4.2.3.3" evidence="1"/>
<dbReference type="EMBL" id="DN870474">
    <property type="status" value="NOT_ANNOTATED_CDS"/>
    <property type="molecule type" value="mRNA"/>
</dbReference>
<dbReference type="RefSeq" id="NP_001183983.1">
    <property type="nucleotide sequence ID" value="NM_001197054.1"/>
</dbReference>
<dbReference type="SMR" id="P54714"/>
<dbReference type="FunCoup" id="P54714">
    <property type="interactions" value="1066"/>
</dbReference>
<dbReference type="STRING" id="9615.ENSCAFP00000021462"/>
<dbReference type="PaxDb" id="9612-ENSCAFP00000021462"/>
<dbReference type="GeneID" id="477711"/>
<dbReference type="KEGG" id="cfa:477711"/>
<dbReference type="CTD" id="7167"/>
<dbReference type="eggNOG" id="KOG1643">
    <property type="taxonomic scope" value="Eukaryota"/>
</dbReference>
<dbReference type="InParanoid" id="P54714"/>
<dbReference type="OrthoDB" id="6715177at2759"/>
<dbReference type="UniPathway" id="UPA00109">
    <property type="reaction ID" value="UER00189"/>
</dbReference>
<dbReference type="UniPathway" id="UPA00138"/>
<dbReference type="Proteomes" id="UP000002254">
    <property type="component" value="Unplaced"/>
</dbReference>
<dbReference type="Proteomes" id="UP000694429">
    <property type="component" value="Unplaced"/>
</dbReference>
<dbReference type="Proteomes" id="UP000694542">
    <property type="component" value="Unplaced"/>
</dbReference>
<dbReference type="Proteomes" id="UP000805418">
    <property type="component" value="Unplaced"/>
</dbReference>
<dbReference type="GO" id="GO:0005829">
    <property type="term" value="C:cytosol"/>
    <property type="evidence" value="ECO:0000318"/>
    <property type="project" value="GO_Central"/>
</dbReference>
<dbReference type="GO" id="GO:0008929">
    <property type="term" value="F:methylglyoxal synthase activity"/>
    <property type="evidence" value="ECO:0000250"/>
    <property type="project" value="UniProtKB"/>
</dbReference>
<dbReference type="GO" id="GO:0042803">
    <property type="term" value="F:protein homodimerization activity"/>
    <property type="evidence" value="ECO:0000250"/>
    <property type="project" value="UniProtKB"/>
</dbReference>
<dbReference type="GO" id="GO:0004807">
    <property type="term" value="F:triose-phosphate isomerase activity"/>
    <property type="evidence" value="ECO:0000250"/>
    <property type="project" value="UniProtKB"/>
</dbReference>
<dbReference type="GO" id="GO:0006094">
    <property type="term" value="P:gluconeogenesis"/>
    <property type="evidence" value="ECO:0000318"/>
    <property type="project" value="GO_Central"/>
</dbReference>
<dbReference type="GO" id="GO:0046166">
    <property type="term" value="P:glyceraldehyde-3-phosphate biosynthetic process"/>
    <property type="evidence" value="ECO:0000250"/>
    <property type="project" value="UniProtKB"/>
</dbReference>
<dbReference type="GO" id="GO:0019563">
    <property type="term" value="P:glycerol catabolic process"/>
    <property type="evidence" value="ECO:0000318"/>
    <property type="project" value="GO_Central"/>
</dbReference>
<dbReference type="GO" id="GO:0006096">
    <property type="term" value="P:glycolytic process"/>
    <property type="evidence" value="ECO:0000318"/>
    <property type="project" value="GO_Central"/>
</dbReference>
<dbReference type="GO" id="GO:0019242">
    <property type="term" value="P:methylglyoxal biosynthetic process"/>
    <property type="evidence" value="ECO:0000250"/>
    <property type="project" value="UniProtKB"/>
</dbReference>
<dbReference type="CDD" id="cd00311">
    <property type="entry name" value="TIM"/>
    <property type="match status" value="1"/>
</dbReference>
<dbReference type="FunFam" id="3.20.20.70:FF:000025">
    <property type="entry name" value="Triosephosphate isomerase"/>
    <property type="match status" value="1"/>
</dbReference>
<dbReference type="Gene3D" id="3.20.20.70">
    <property type="entry name" value="Aldolase class I"/>
    <property type="match status" value="1"/>
</dbReference>
<dbReference type="HAMAP" id="MF_00147_B">
    <property type="entry name" value="TIM_B"/>
    <property type="match status" value="1"/>
</dbReference>
<dbReference type="InterPro" id="IPR013785">
    <property type="entry name" value="Aldolase_TIM"/>
</dbReference>
<dbReference type="InterPro" id="IPR035990">
    <property type="entry name" value="TIM_sf"/>
</dbReference>
<dbReference type="InterPro" id="IPR022896">
    <property type="entry name" value="TrioseP_Isoase_bac/euk"/>
</dbReference>
<dbReference type="InterPro" id="IPR000652">
    <property type="entry name" value="Triosephosphate_isomerase"/>
</dbReference>
<dbReference type="InterPro" id="IPR020861">
    <property type="entry name" value="Triosephosphate_isomerase_AS"/>
</dbReference>
<dbReference type="NCBIfam" id="TIGR00419">
    <property type="entry name" value="tim"/>
    <property type="match status" value="1"/>
</dbReference>
<dbReference type="PANTHER" id="PTHR21139">
    <property type="entry name" value="TRIOSEPHOSPHATE ISOMERASE"/>
    <property type="match status" value="1"/>
</dbReference>
<dbReference type="PANTHER" id="PTHR21139:SF2">
    <property type="entry name" value="TRIOSEPHOSPHATE ISOMERASE"/>
    <property type="match status" value="1"/>
</dbReference>
<dbReference type="Pfam" id="PF00121">
    <property type="entry name" value="TIM"/>
    <property type="match status" value="1"/>
</dbReference>
<dbReference type="SUPFAM" id="SSF51351">
    <property type="entry name" value="Triosephosphate isomerase (TIM)"/>
    <property type="match status" value="1"/>
</dbReference>
<dbReference type="PROSITE" id="PS00171">
    <property type="entry name" value="TIM_1"/>
    <property type="match status" value="1"/>
</dbReference>
<dbReference type="PROSITE" id="PS51440">
    <property type="entry name" value="TIM_2"/>
    <property type="match status" value="1"/>
</dbReference>
<reference key="1">
    <citation type="submission" date="2005-04" db="EMBL/GenBank/DDBJ databases">
        <title>NEIBank analysis of dog cornea.</title>
        <authorList>
            <person name="Wistow G."/>
        </authorList>
    </citation>
    <scope>NUCLEOTIDE SEQUENCE [LARGE SCALE MRNA]</scope>
    <source>
        <strain>Beagle</strain>
        <tissue>Cornea</tissue>
    </source>
</reference>
<reference key="2">
    <citation type="journal article" date="1997" name="Electrophoresis">
        <title>HSC-2DPAGE and the two-dimensional gel electrophoresis database of dog heart proteins.</title>
        <authorList>
            <person name="Dunn M.J."/>
            <person name="Corbett J.M."/>
            <person name="Wheeler C.H."/>
        </authorList>
    </citation>
    <scope>PROTEIN SEQUENCE OF 8-12</scope>
    <source>
        <tissue>Heart</tissue>
    </source>
</reference>
<gene>
    <name type="primary">TPI1</name>
</gene>
<keyword id="KW-0007">Acetylation</keyword>
<keyword id="KW-0963">Cytoplasm</keyword>
<keyword id="KW-0903">Direct protein sequencing</keyword>
<keyword id="KW-0312">Gluconeogenesis</keyword>
<keyword id="KW-0324">Glycolysis</keyword>
<keyword id="KW-0413">Isomerase</keyword>
<keyword id="KW-1017">Isopeptide bond</keyword>
<keyword id="KW-0456">Lyase</keyword>
<keyword id="KW-0488">Methylation</keyword>
<keyword id="KW-0944">Nitration</keyword>
<keyword id="KW-0597">Phosphoprotein</keyword>
<keyword id="KW-1185">Reference proteome</keyword>
<keyword id="KW-0832">Ubl conjugation</keyword>
<accession>P54714</accession>
<comment type="function">
    <text evidence="1">Triosephosphate isomerase is an extremely efficient metabolic enzyme that catalyzes the interconversion between dihydroxyacetone phosphate (DHAP) and D-glyceraldehyde-3-phosphate (G3P) in glycolysis and gluconeogenesis.</text>
</comment>
<comment type="function">
    <text evidence="1">It is also responsible for the non-negligible production of methylglyoxal a reactive cytotoxic side-product that modifies and can alter proteins, DNA and lipids.</text>
</comment>
<comment type="catalytic activity">
    <reaction evidence="1">
        <text>dihydroxyacetone phosphate = methylglyoxal + phosphate</text>
        <dbReference type="Rhea" id="RHEA:17937"/>
        <dbReference type="ChEBI" id="CHEBI:17158"/>
        <dbReference type="ChEBI" id="CHEBI:43474"/>
        <dbReference type="ChEBI" id="CHEBI:57642"/>
        <dbReference type="EC" id="4.2.3.3"/>
    </reaction>
</comment>
<comment type="catalytic activity">
    <reaction evidence="5">
        <text>D-glyceraldehyde 3-phosphate = dihydroxyacetone phosphate</text>
        <dbReference type="Rhea" id="RHEA:18585"/>
        <dbReference type="ChEBI" id="CHEBI:57642"/>
        <dbReference type="ChEBI" id="CHEBI:59776"/>
        <dbReference type="EC" id="5.3.1.1"/>
    </reaction>
</comment>
<comment type="pathway">
    <text evidence="5">Carbohydrate degradation; glycolysis; D-glyceraldehyde 3-phosphate from glycerone phosphate: step 1/1.</text>
</comment>
<comment type="pathway">
    <text evidence="5">Carbohydrate biosynthesis; gluconeogenesis.</text>
</comment>
<comment type="subunit">
    <text evidence="5">Homodimer.</text>
</comment>
<comment type="subcellular location">
    <subcellularLocation>
        <location evidence="5">Cytoplasm</location>
    </subcellularLocation>
</comment>
<comment type="similarity">
    <text evidence="6">Belongs to the triosephosphate isomerase family.</text>
</comment>
<evidence type="ECO:0000250" key="1">
    <source>
        <dbReference type="UniProtKB" id="P00939"/>
    </source>
</evidence>
<evidence type="ECO:0000250" key="2">
    <source>
        <dbReference type="UniProtKB" id="P17751"/>
    </source>
</evidence>
<evidence type="ECO:0000250" key="3">
    <source>
        <dbReference type="UniProtKB" id="P48500"/>
    </source>
</evidence>
<evidence type="ECO:0000250" key="4">
    <source>
        <dbReference type="UniProtKB" id="P60174"/>
    </source>
</evidence>
<evidence type="ECO:0000255" key="5">
    <source>
        <dbReference type="PROSITE-ProRule" id="PRU10127"/>
    </source>
</evidence>
<evidence type="ECO:0000305" key="6"/>
<proteinExistence type="evidence at protein level"/>
<organism>
    <name type="scientific">Canis lupus familiaris</name>
    <name type="common">Dog</name>
    <name type="synonym">Canis familiaris</name>
    <dbReference type="NCBI Taxonomy" id="9615"/>
    <lineage>
        <taxon>Eukaryota</taxon>
        <taxon>Metazoa</taxon>
        <taxon>Chordata</taxon>
        <taxon>Craniata</taxon>
        <taxon>Vertebrata</taxon>
        <taxon>Euteleostomi</taxon>
        <taxon>Mammalia</taxon>
        <taxon>Eutheria</taxon>
        <taxon>Laurasiatheria</taxon>
        <taxon>Carnivora</taxon>
        <taxon>Caniformia</taxon>
        <taxon>Canidae</taxon>
        <taxon>Canis</taxon>
    </lineage>
</organism>
<name>TPIS_CANLF</name>
<sequence length="249" mass="26715">MAPSRKFFVGGNWKMNGRKKNLGELITTLNAAKVPADTEVVCAPPTAYIDFARQKLDAKIAVAAQNCYKVTNGAFTGEISPGMIKDCGATWVVLGHSERRHVFGESDELIGQKVAHALAEGLGVIACIGEKLDEREAGITEKVVFEQTKVIADNVKDWSKVVLAYEPVWAIGTGKTATPQQAQEVHEKLRGWLKSNVSDAVAQSTRIIYGGSVTGATCKELASQPDVDGFLVGGASLKPEFVDIINAKQ</sequence>
<protein>
    <recommendedName>
        <fullName>Triosephosphate isomerase</fullName>
        <shortName>TIM</shortName>
        <ecNumber evidence="5">5.3.1.1</ecNumber>
    </recommendedName>
    <alternativeName>
        <fullName evidence="1">Methylglyoxal synthase</fullName>
        <ecNumber evidence="1">4.2.3.3</ecNumber>
    </alternativeName>
    <alternativeName>
        <fullName>Triose-phosphate isomerase</fullName>
    </alternativeName>
</protein>